<protein>
    <recommendedName>
        <fullName evidence="1">NAD(P)H-quinone oxidoreductase subunit 2 B, chloroplastic</fullName>
        <ecNumber evidence="1">7.1.1.-</ecNumber>
    </recommendedName>
    <alternativeName>
        <fullName evidence="1">NAD(P)H dehydrogenase, subunit 2 B</fullName>
    </alternativeName>
    <alternativeName>
        <fullName evidence="1">NADH-plastoquinone oxidoreductase subunit 2 B</fullName>
    </alternativeName>
</protein>
<organism>
    <name type="scientific">Lemna minor</name>
    <name type="common">Common duckweed</name>
    <dbReference type="NCBI Taxonomy" id="4472"/>
    <lineage>
        <taxon>Eukaryota</taxon>
        <taxon>Viridiplantae</taxon>
        <taxon>Streptophyta</taxon>
        <taxon>Embryophyta</taxon>
        <taxon>Tracheophyta</taxon>
        <taxon>Spermatophyta</taxon>
        <taxon>Magnoliopsida</taxon>
        <taxon>Liliopsida</taxon>
        <taxon>Araceae</taxon>
        <taxon>Lemnoideae</taxon>
        <taxon>Lemna</taxon>
    </lineage>
</organism>
<proteinExistence type="inferred from homology"/>
<evidence type="ECO:0000255" key="1">
    <source>
        <dbReference type="HAMAP-Rule" id="MF_00445"/>
    </source>
</evidence>
<geneLocation type="chloroplast"/>
<keyword id="KW-0150">Chloroplast</keyword>
<keyword id="KW-0472">Membrane</keyword>
<keyword id="KW-0520">NAD</keyword>
<keyword id="KW-0521">NADP</keyword>
<keyword id="KW-0934">Plastid</keyword>
<keyword id="KW-0618">Plastoquinone</keyword>
<keyword id="KW-0874">Quinone</keyword>
<keyword id="KW-0793">Thylakoid</keyword>
<keyword id="KW-1278">Translocase</keyword>
<keyword id="KW-0812">Transmembrane</keyword>
<keyword id="KW-1133">Transmembrane helix</keyword>
<keyword id="KW-0813">Transport</keyword>
<feature type="chain" id="PRO_0000391279" description="NAD(P)H-quinone oxidoreductase subunit 2 B, chloroplastic">
    <location>
        <begin position="1"/>
        <end position="510"/>
    </location>
</feature>
<feature type="transmembrane region" description="Helical" evidence="1">
    <location>
        <begin position="24"/>
        <end position="44"/>
    </location>
</feature>
<feature type="transmembrane region" description="Helical" evidence="1">
    <location>
        <begin position="59"/>
        <end position="79"/>
    </location>
</feature>
<feature type="transmembrane region" description="Helical" evidence="1">
    <location>
        <begin position="99"/>
        <end position="119"/>
    </location>
</feature>
<feature type="transmembrane region" description="Helical" evidence="1">
    <location>
        <begin position="124"/>
        <end position="144"/>
    </location>
</feature>
<feature type="transmembrane region" description="Helical" evidence="1">
    <location>
        <begin position="149"/>
        <end position="169"/>
    </location>
</feature>
<feature type="transmembrane region" description="Helical" evidence="1">
    <location>
        <begin position="184"/>
        <end position="204"/>
    </location>
</feature>
<feature type="transmembrane region" description="Helical" evidence="1">
    <location>
        <begin position="229"/>
        <end position="249"/>
    </location>
</feature>
<feature type="transmembrane region" description="Helical" evidence="1">
    <location>
        <begin position="262"/>
        <end position="284"/>
    </location>
</feature>
<feature type="transmembrane region" description="Helical" evidence="1">
    <location>
        <begin position="295"/>
        <end position="315"/>
    </location>
</feature>
<feature type="transmembrane region" description="Helical" evidence="1">
    <location>
        <begin position="323"/>
        <end position="343"/>
    </location>
</feature>
<feature type="transmembrane region" description="Helical" evidence="1">
    <location>
        <begin position="354"/>
        <end position="374"/>
    </location>
</feature>
<feature type="transmembrane region" description="Helical" evidence="1">
    <location>
        <begin position="395"/>
        <end position="415"/>
    </location>
</feature>
<feature type="transmembrane region" description="Helical" evidence="1">
    <location>
        <begin position="418"/>
        <end position="438"/>
    </location>
</feature>
<dbReference type="EC" id="7.1.1.-" evidence="1"/>
<dbReference type="EMBL" id="DQ400350">
    <property type="protein sequence ID" value="ABD48556.1"/>
    <property type="molecule type" value="Genomic_DNA"/>
</dbReference>
<dbReference type="SMR" id="P0CC83"/>
<dbReference type="GO" id="GO:0009535">
    <property type="term" value="C:chloroplast thylakoid membrane"/>
    <property type="evidence" value="ECO:0007669"/>
    <property type="project" value="UniProtKB-SubCell"/>
</dbReference>
<dbReference type="GO" id="GO:0008137">
    <property type="term" value="F:NADH dehydrogenase (ubiquinone) activity"/>
    <property type="evidence" value="ECO:0007669"/>
    <property type="project" value="InterPro"/>
</dbReference>
<dbReference type="GO" id="GO:0048038">
    <property type="term" value="F:quinone binding"/>
    <property type="evidence" value="ECO:0007669"/>
    <property type="project" value="UniProtKB-KW"/>
</dbReference>
<dbReference type="GO" id="GO:0042773">
    <property type="term" value="P:ATP synthesis coupled electron transport"/>
    <property type="evidence" value="ECO:0007669"/>
    <property type="project" value="InterPro"/>
</dbReference>
<dbReference type="GO" id="GO:0019684">
    <property type="term" value="P:photosynthesis, light reaction"/>
    <property type="evidence" value="ECO:0007669"/>
    <property type="project" value="UniProtKB-UniRule"/>
</dbReference>
<dbReference type="HAMAP" id="MF_00445">
    <property type="entry name" value="NDH1_NuoN_1"/>
    <property type="match status" value="1"/>
</dbReference>
<dbReference type="InterPro" id="IPR010096">
    <property type="entry name" value="NADH-Q_OxRdtase_suN/2"/>
</dbReference>
<dbReference type="InterPro" id="IPR001750">
    <property type="entry name" value="ND/Mrp_TM"/>
</dbReference>
<dbReference type="InterPro" id="IPR045693">
    <property type="entry name" value="Ndh2_N"/>
</dbReference>
<dbReference type="NCBIfam" id="TIGR01770">
    <property type="entry name" value="NDH_I_N"/>
    <property type="match status" value="1"/>
</dbReference>
<dbReference type="NCBIfam" id="NF002701">
    <property type="entry name" value="PRK02504.1"/>
    <property type="match status" value="1"/>
</dbReference>
<dbReference type="PANTHER" id="PTHR22773">
    <property type="entry name" value="NADH DEHYDROGENASE"/>
    <property type="match status" value="1"/>
</dbReference>
<dbReference type="Pfam" id="PF19530">
    <property type="entry name" value="Ndh2_N"/>
    <property type="match status" value="1"/>
</dbReference>
<dbReference type="Pfam" id="PF00361">
    <property type="entry name" value="Proton_antipo_M"/>
    <property type="match status" value="1"/>
</dbReference>
<dbReference type="PRINTS" id="PR01434">
    <property type="entry name" value="NADHDHGNASE5"/>
</dbReference>
<comment type="function">
    <text evidence="1">NDH shuttles electrons from NAD(P)H:plastoquinone, via FMN and iron-sulfur (Fe-S) centers, to quinones in the photosynthetic chain and possibly in a chloroplast respiratory chain. The immediate electron acceptor for the enzyme in this species is believed to be plastoquinone. Couples the redox reaction to proton translocation, and thus conserves the redox energy in a proton gradient.</text>
</comment>
<comment type="catalytic activity">
    <reaction evidence="1">
        <text>a plastoquinone + NADH + (n+1) H(+)(in) = a plastoquinol + NAD(+) + n H(+)(out)</text>
        <dbReference type="Rhea" id="RHEA:42608"/>
        <dbReference type="Rhea" id="RHEA-COMP:9561"/>
        <dbReference type="Rhea" id="RHEA-COMP:9562"/>
        <dbReference type="ChEBI" id="CHEBI:15378"/>
        <dbReference type="ChEBI" id="CHEBI:17757"/>
        <dbReference type="ChEBI" id="CHEBI:57540"/>
        <dbReference type="ChEBI" id="CHEBI:57945"/>
        <dbReference type="ChEBI" id="CHEBI:62192"/>
    </reaction>
</comment>
<comment type="catalytic activity">
    <reaction evidence="1">
        <text>a plastoquinone + NADPH + (n+1) H(+)(in) = a plastoquinol + NADP(+) + n H(+)(out)</text>
        <dbReference type="Rhea" id="RHEA:42612"/>
        <dbReference type="Rhea" id="RHEA-COMP:9561"/>
        <dbReference type="Rhea" id="RHEA-COMP:9562"/>
        <dbReference type="ChEBI" id="CHEBI:15378"/>
        <dbReference type="ChEBI" id="CHEBI:17757"/>
        <dbReference type="ChEBI" id="CHEBI:57783"/>
        <dbReference type="ChEBI" id="CHEBI:58349"/>
        <dbReference type="ChEBI" id="CHEBI:62192"/>
    </reaction>
</comment>
<comment type="subunit">
    <text evidence="1">NDH is composed of at least 16 different subunits, 5 of which are encoded in the nucleus.</text>
</comment>
<comment type="subcellular location">
    <subcellularLocation>
        <location evidence="1">Plastid</location>
        <location evidence="1">Chloroplast thylakoid membrane</location>
        <topology evidence="1">Multi-pass membrane protein</topology>
    </subcellularLocation>
</comment>
<comment type="similarity">
    <text evidence="1">Belongs to the complex I subunit 2 family.</text>
</comment>
<name>NU2C2_LEMMI</name>
<accession>P0CC83</accession>
<accession>A9L9E0</accession>
<sequence length="510" mass="56821">MIWHVQNEVFILDSTRIFMKAFHLLLFNGSFILPECILIFGLILLLMIDSTSDQKDRPWFYFISSTSLVMSITALLFRWREEPMISFSGNFQTNNFNEIFQFLILLCSTLCIPLSVEYIECTEMAITEFLLFILTATLGGMFLCGANDLITIFVALECFSLCSYLLSGYTKRDVRSNEATTKYLLMGGASSSILVHGFSWLYGLSGGEIELQEIVNGLINTQMYNSPGISIALIFITVGIGFKLSLAPFHQWTPDVYEGSPTPVVAFLSVTSKVAASALATRIFDIPFYFSSNEWHLLLEILAILSMILGNLIAITQTSMKRMLAYSSIGQIGYVIIGIIVGDSNDGYASMITYMLFYIAMNLGTFARIVLFGLRTGTDNIRDYAGLYTKDPFLALSLALCLLSLGGLPPLAGFFGKLHLFWCGWQAGLYFLVSIGLLTSVVSIYYYLKIIKLLMTGRNQEITPHVRNYRKSPLRSNNSIELSMTVCVIASTIPGISMNPILAIAQDTLF</sequence>
<reference key="1">
    <citation type="journal article" date="2008" name="J. Mol. Evol.">
        <title>Complete sequence of the Duckweed (Lemna minor) chloroplast genome: structural organization and phylogenetic relationships to other angiosperms.</title>
        <authorList>
            <person name="Mardanov A.V."/>
            <person name="Ravin N.V."/>
            <person name="Kuznetsov B.B."/>
            <person name="Samigullin T.H."/>
            <person name="Antonov A.S."/>
            <person name="Kolganova T.V."/>
            <person name="Skyabin K.G."/>
        </authorList>
    </citation>
    <scope>NUCLEOTIDE SEQUENCE [LARGE SCALE GENOMIC DNA]</scope>
</reference>
<gene>
    <name evidence="1" type="primary">ndhB2</name>
</gene>